<keyword id="KW-0903">Direct protein sequencing</keyword>
<keyword id="KW-0484">Methanogenesis</keyword>
<dbReference type="EMBL" id="U66032">
    <property type="protein sequence ID" value="AAC44651.1"/>
    <property type="molecule type" value="Genomic_DNA"/>
</dbReference>
<dbReference type="SMR" id="P72020"/>
<dbReference type="KEGG" id="ag:AAC44651"/>
<dbReference type="BioCyc" id="MetaCyc:CDHBMSARC-MONOMER"/>
<dbReference type="UniPathway" id="UPA00642"/>
<dbReference type="GO" id="GO:0043885">
    <property type="term" value="F:anaerobic carbon-monoxide dehydrogenase activity"/>
    <property type="evidence" value="ECO:0000314"/>
    <property type="project" value="MENGO"/>
</dbReference>
<dbReference type="GO" id="GO:0019385">
    <property type="term" value="P:methanogenesis, from acetate"/>
    <property type="evidence" value="ECO:0007669"/>
    <property type="project" value="UniProtKB-UniRule"/>
</dbReference>
<dbReference type="FunFam" id="3.40.50.1220:FF:000057">
    <property type="entry name" value="Acetyl-CoA decarbonylase/synthase complex subunit epsilon"/>
    <property type="match status" value="1"/>
</dbReference>
<dbReference type="Gene3D" id="3.40.50.1220">
    <property type="entry name" value="TPP-binding domain"/>
    <property type="match status" value="1"/>
</dbReference>
<dbReference type="HAMAP" id="MF_01134">
    <property type="entry name" value="CdhB"/>
    <property type="match status" value="1"/>
</dbReference>
<dbReference type="InterPro" id="IPR003704">
    <property type="entry name" value="CdhB"/>
</dbReference>
<dbReference type="InterPro" id="IPR029035">
    <property type="entry name" value="DHS-like_NAD/FAD-binding_dom"/>
</dbReference>
<dbReference type="NCBIfam" id="TIGR00315">
    <property type="entry name" value="cdhB"/>
    <property type="match status" value="1"/>
</dbReference>
<dbReference type="Pfam" id="PF02552">
    <property type="entry name" value="CO_dh"/>
    <property type="match status" value="1"/>
</dbReference>
<dbReference type="PIRSF" id="PIRSF006035">
    <property type="entry name" value="CO_dh_b_ACDS_e"/>
    <property type="match status" value="1"/>
</dbReference>
<dbReference type="SUPFAM" id="SSF52467">
    <property type="entry name" value="DHS-like NAD/FAD-binding domain"/>
    <property type="match status" value="1"/>
</dbReference>
<proteinExistence type="evidence at protein level"/>
<organism>
    <name type="scientific">Methanosarcina thermophila</name>
    <dbReference type="NCBI Taxonomy" id="2210"/>
    <lineage>
        <taxon>Archaea</taxon>
        <taxon>Methanobacteriati</taxon>
        <taxon>Methanobacteriota</taxon>
        <taxon>Stenosarchaea group</taxon>
        <taxon>Methanomicrobia</taxon>
        <taxon>Methanosarcinales</taxon>
        <taxon>Methanosarcinaceae</taxon>
        <taxon>Methanosarcina</taxon>
    </lineage>
</organism>
<evidence type="ECO:0000255" key="1">
    <source>
        <dbReference type="HAMAP-Rule" id="MF_01134"/>
    </source>
</evidence>
<evidence type="ECO:0000269" key="2">
    <source>
    </source>
</evidence>
<feature type="initiator methionine" description="Removed" evidence="2">
    <location>
        <position position="1"/>
    </location>
</feature>
<feature type="chain" id="PRO_0000155095" description="Acetyl-CoA decarbonylase/synthase complex subunit epsilon 1">
    <location>
        <begin position="2"/>
        <end position="170"/>
    </location>
</feature>
<comment type="function">
    <text evidence="1">Part of a complex that catalyzes the reversible cleavage of acetyl-CoA, allowing growth on acetate as sole source of carbon and energy. The alpha-epsilon subcomponent functions as a carbon monoxide dehydrogenase. The precise role of the epsilon subunit is unclear; it may have a stabilizing role within the alpha(2)epsilon(2) component and/or be involved in electron transfer to FAD during a potential FAD-mediated CO oxidation.</text>
</comment>
<comment type="pathway">
    <text evidence="1">One-carbon metabolism; methanogenesis from acetate.</text>
</comment>
<comment type="subunit">
    <text evidence="1">Heterotetramer of two alpha and two epsilon subunits. The ACDS complex is made up of alpha, epsilon, beta, gamma and delta subunits with a probable stoichiometry of (alpha(2)epsilon(2))(4)-beta(8)-(gamma(1)delta(1))(8).</text>
</comment>
<comment type="similarity">
    <text evidence="1">Belongs to the CdhB family.</text>
</comment>
<sequence>MVDTTKNTKLFTSYGVTTSKAINPDMAAKMISKAKRPLFVVGTGVLRPEILDRAVKIAKKANLPIAATGSSLNGFLDKDVDAKYINVHQLGFYLTDPAWPGLDGKGNYDTIIILEFKKYYINQVLSGTKNFSKVKSISIGKDYIQNATMSFGNISREEHFAALDELIDLL</sequence>
<name>ACDE1_METTE</name>
<gene>
    <name type="primary">cdhB1</name>
</gene>
<protein>
    <recommendedName>
        <fullName evidence="1">Acetyl-CoA decarbonylase/synthase complex subunit epsilon 1</fullName>
        <shortName evidence="1">ACDS complex subunit epsilon 1</shortName>
    </recommendedName>
    <alternativeName>
        <fullName evidence="1">ACDS complex carbon monoxide dehydrogenase subunit epsilon 1</fullName>
        <shortName evidence="1">ACDS CODH subunit epsilon 1</shortName>
    </alternativeName>
</protein>
<accession>P72020</accession>
<reference key="1">
    <citation type="journal article" date="1996" name="J. Bacteriol.">
        <title>Analysis of the CO dehydrogenase/acetyl-Coenzyme A synthase operon of Methanosarcina thermophila.</title>
        <authorList>
            <person name="Maupin-Furlow J.A."/>
            <person name="Ferry J.G."/>
        </authorList>
    </citation>
    <scope>NUCLEOTIDE SEQUENCE [GENOMIC DNA]</scope>
    <scope>PROTEIN SEQUENCE OF 2-16</scope>
    <source>
        <strain>ATCC 43570 / DSM 1825 / OCM 12 / TM-1</strain>
    </source>
</reference>